<dbReference type="EMBL" id="CP000435">
    <property type="protein sequence ID" value="ABI47000.1"/>
    <property type="molecule type" value="Genomic_DNA"/>
</dbReference>
<dbReference type="RefSeq" id="WP_011618354.1">
    <property type="nucleotide sequence ID" value="NC_008319.1"/>
</dbReference>
<dbReference type="SMR" id="Q0ID57"/>
<dbReference type="STRING" id="64471.sync_0383"/>
<dbReference type="KEGG" id="syg:sync_0383"/>
<dbReference type="eggNOG" id="COG0049">
    <property type="taxonomic scope" value="Bacteria"/>
</dbReference>
<dbReference type="HOGENOM" id="CLU_072226_1_1_3"/>
<dbReference type="OrthoDB" id="9807653at2"/>
<dbReference type="Proteomes" id="UP000001961">
    <property type="component" value="Chromosome"/>
</dbReference>
<dbReference type="GO" id="GO:0015935">
    <property type="term" value="C:small ribosomal subunit"/>
    <property type="evidence" value="ECO:0007669"/>
    <property type="project" value="InterPro"/>
</dbReference>
<dbReference type="GO" id="GO:0019843">
    <property type="term" value="F:rRNA binding"/>
    <property type="evidence" value="ECO:0007669"/>
    <property type="project" value="UniProtKB-UniRule"/>
</dbReference>
<dbReference type="GO" id="GO:0003735">
    <property type="term" value="F:structural constituent of ribosome"/>
    <property type="evidence" value="ECO:0007669"/>
    <property type="project" value="InterPro"/>
</dbReference>
<dbReference type="GO" id="GO:0000049">
    <property type="term" value="F:tRNA binding"/>
    <property type="evidence" value="ECO:0007669"/>
    <property type="project" value="UniProtKB-UniRule"/>
</dbReference>
<dbReference type="GO" id="GO:0006412">
    <property type="term" value="P:translation"/>
    <property type="evidence" value="ECO:0007669"/>
    <property type="project" value="UniProtKB-UniRule"/>
</dbReference>
<dbReference type="CDD" id="cd14869">
    <property type="entry name" value="uS7_Bacteria"/>
    <property type="match status" value="1"/>
</dbReference>
<dbReference type="FunFam" id="1.10.455.10:FF:000001">
    <property type="entry name" value="30S ribosomal protein S7"/>
    <property type="match status" value="1"/>
</dbReference>
<dbReference type="Gene3D" id="1.10.455.10">
    <property type="entry name" value="Ribosomal protein S7 domain"/>
    <property type="match status" value="1"/>
</dbReference>
<dbReference type="HAMAP" id="MF_00480_B">
    <property type="entry name" value="Ribosomal_uS7_B"/>
    <property type="match status" value="1"/>
</dbReference>
<dbReference type="InterPro" id="IPR000235">
    <property type="entry name" value="Ribosomal_uS7"/>
</dbReference>
<dbReference type="InterPro" id="IPR005717">
    <property type="entry name" value="Ribosomal_uS7_bac/org-type"/>
</dbReference>
<dbReference type="InterPro" id="IPR020606">
    <property type="entry name" value="Ribosomal_uS7_CS"/>
</dbReference>
<dbReference type="InterPro" id="IPR023798">
    <property type="entry name" value="Ribosomal_uS7_dom"/>
</dbReference>
<dbReference type="InterPro" id="IPR036823">
    <property type="entry name" value="Ribosomal_uS7_dom_sf"/>
</dbReference>
<dbReference type="NCBIfam" id="TIGR01029">
    <property type="entry name" value="rpsG_bact"/>
    <property type="match status" value="1"/>
</dbReference>
<dbReference type="PANTHER" id="PTHR11205">
    <property type="entry name" value="RIBOSOMAL PROTEIN S7"/>
    <property type="match status" value="1"/>
</dbReference>
<dbReference type="Pfam" id="PF00177">
    <property type="entry name" value="Ribosomal_S7"/>
    <property type="match status" value="1"/>
</dbReference>
<dbReference type="PIRSF" id="PIRSF002122">
    <property type="entry name" value="RPS7p_RPS7a_RPS5e_RPS7o"/>
    <property type="match status" value="1"/>
</dbReference>
<dbReference type="SUPFAM" id="SSF47973">
    <property type="entry name" value="Ribosomal protein S7"/>
    <property type="match status" value="1"/>
</dbReference>
<dbReference type="PROSITE" id="PS00052">
    <property type="entry name" value="RIBOSOMAL_S7"/>
    <property type="match status" value="1"/>
</dbReference>
<proteinExistence type="inferred from homology"/>
<sequence>MSRRNAAVKRPILPDPQFNNRLATMMVARLMKHGKKSTAQRILSDAFGMIGERTGGDPVELFETAVKNATPLVEVRARRVGGATYQVPMEVRQERGTAMALRWLVNFSRARNGRSMAQKLAGELMDAANEAGSAVRKREETHKMAEANKAFAHYRY</sequence>
<organism>
    <name type="scientific">Synechococcus sp. (strain CC9311)</name>
    <dbReference type="NCBI Taxonomy" id="64471"/>
    <lineage>
        <taxon>Bacteria</taxon>
        <taxon>Bacillati</taxon>
        <taxon>Cyanobacteriota</taxon>
        <taxon>Cyanophyceae</taxon>
        <taxon>Synechococcales</taxon>
        <taxon>Synechococcaceae</taxon>
        <taxon>Synechococcus</taxon>
    </lineage>
</organism>
<gene>
    <name evidence="1" type="primary">rpsG</name>
    <name evidence="1" type="synonym">rps7</name>
    <name type="ordered locus">sync_0383</name>
</gene>
<feature type="chain" id="PRO_1000014312" description="Small ribosomal subunit protein uS7">
    <location>
        <begin position="1"/>
        <end position="156"/>
    </location>
</feature>
<evidence type="ECO:0000255" key="1">
    <source>
        <dbReference type="HAMAP-Rule" id="MF_00480"/>
    </source>
</evidence>
<evidence type="ECO:0000305" key="2"/>
<comment type="function">
    <text evidence="1">One of the primary rRNA binding proteins, it binds directly to 16S rRNA where it nucleates assembly of the head domain of the 30S subunit. Is located at the subunit interface close to the decoding center, probably blocks exit of the E-site tRNA.</text>
</comment>
<comment type="subunit">
    <text evidence="1">Part of the 30S ribosomal subunit. Contacts proteins S9 and S11.</text>
</comment>
<comment type="similarity">
    <text evidence="1">Belongs to the universal ribosomal protein uS7 family.</text>
</comment>
<accession>Q0ID57</accession>
<name>RS7_SYNS3</name>
<protein>
    <recommendedName>
        <fullName evidence="1">Small ribosomal subunit protein uS7</fullName>
    </recommendedName>
    <alternativeName>
        <fullName evidence="2">30S ribosomal protein S7</fullName>
    </alternativeName>
</protein>
<keyword id="KW-1185">Reference proteome</keyword>
<keyword id="KW-0687">Ribonucleoprotein</keyword>
<keyword id="KW-0689">Ribosomal protein</keyword>
<keyword id="KW-0694">RNA-binding</keyword>
<keyword id="KW-0699">rRNA-binding</keyword>
<keyword id="KW-0820">tRNA-binding</keyword>
<reference key="1">
    <citation type="journal article" date="2006" name="Proc. Natl. Acad. Sci. U.S.A.">
        <title>Genome sequence of Synechococcus CC9311: insights into adaptation to a coastal environment.</title>
        <authorList>
            <person name="Palenik B."/>
            <person name="Ren Q."/>
            <person name="Dupont C.L."/>
            <person name="Myers G.S."/>
            <person name="Heidelberg J.F."/>
            <person name="Badger J.H."/>
            <person name="Madupu R."/>
            <person name="Nelson W.C."/>
            <person name="Brinkac L.M."/>
            <person name="Dodson R.J."/>
            <person name="Durkin A.S."/>
            <person name="Daugherty S.C."/>
            <person name="Sullivan S.A."/>
            <person name="Khouri H."/>
            <person name="Mohamoud Y."/>
            <person name="Halpin R."/>
            <person name="Paulsen I.T."/>
        </authorList>
    </citation>
    <scope>NUCLEOTIDE SEQUENCE [LARGE SCALE GENOMIC DNA]</scope>
    <source>
        <strain>CC9311</strain>
    </source>
</reference>